<gene>
    <name evidence="1" type="primary">groES</name>
    <name evidence="1" type="synonym">groS</name>
    <name type="ordered locus">Pfl01_4502</name>
</gene>
<accession>Q3K7L5</accession>
<dbReference type="EMBL" id="CP000094">
    <property type="protein sequence ID" value="ABA76239.1"/>
    <property type="molecule type" value="Genomic_DNA"/>
</dbReference>
<dbReference type="RefSeq" id="WP_011335724.1">
    <property type="nucleotide sequence ID" value="NC_007492.2"/>
</dbReference>
<dbReference type="SMR" id="Q3K7L5"/>
<dbReference type="KEGG" id="pfo:Pfl01_4502"/>
<dbReference type="eggNOG" id="COG0234">
    <property type="taxonomic scope" value="Bacteria"/>
</dbReference>
<dbReference type="HOGENOM" id="CLU_132825_2_0_6"/>
<dbReference type="Proteomes" id="UP000002704">
    <property type="component" value="Chromosome"/>
</dbReference>
<dbReference type="GO" id="GO:0005737">
    <property type="term" value="C:cytoplasm"/>
    <property type="evidence" value="ECO:0007669"/>
    <property type="project" value="UniProtKB-SubCell"/>
</dbReference>
<dbReference type="GO" id="GO:0005524">
    <property type="term" value="F:ATP binding"/>
    <property type="evidence" value="ECO:0007669"/>
    <property type="project" value="InterPro"/>
</dbReference>
<dbReference type="GO" id="GO:0046872">
    <property type="term" value="F:metal ion binding"/>
    <property type="evidence" value="ECO:0007669"/>
    <property type="project" value="TreeGrafter"/>
</dbReference>
<dbReference type="GO" id="GO:0044183">
    <property type="term" value="F:protein folding chaperone"/>
    <property type="evidence" value="ECO:0007669"/>
    <property type="project" value="InterPro"/>
</dbReference>
<dbReference type="GO" id="GO:0051087">
    <property type="term" value="F:protein-folding chaperone binding"/>
    <property type="evidence" value="ECO:0007669"/>
    <property type="project" value="TreeGrafter"/>
</dbReference>
<dbReference type="GO" id="GO:0051082">
    <property type="term" value="F:unfolded protein binding"/>
    <property type="evidence" value="ECO:0007669"/>
    <property type="project" value="TreeGrafter"/>
</dbReference>
<dbReference type="GO" id="GO:0051085">
    <property type="term" value="P:chaperone cofactor-dependent protein refolding"/>
    <property type="evidence" value="ECO:0007669"/>
    <property type="project" value="TreeGrafter"/>
</dbReference>
<dbReference type="CDD" id="cd00320">
    <property type="entry name" value="cpn10"/>
    <property type="match status" value="1"/>
</dbReference>
<dbReference type="FunFam" id="2.30.33.40:FF:000001">
    <property type="entry name" value="10 kDa chaperonin"/>
    <property type="match status" value="1"/>
</dbReference>
<dbReference type="Gene3D" id="2.30.33.40">
    <property type="entry name" value="GroES chaperonin"/>
    <property type="match status" value="1"/>
</dbReference>
<dbReference type="HAMAP" id="MF_00580">
    <property type="entry name" value="CH10"/>
    <property type="match status" value="1"/>
</dbReference>
<dbReference type="InterPro" id="IPR020818">
    <property type="entry name" value="Chaperonin_GroES"/>
</dbReference>
<dbReference type="InterPro" id="IPR037124">
    <property type="entry name" value="Chaperonin_GroES_sf"/>
</dbReference>
<dbReference type="InterPro" id="IPR018369">
    <property type="entry name" value="Chaprnonin_Cpn10_CS"/>
</dbReference>
<dbReference type="InterPro" id="IPR011032">
    <property type="entry name" value="GroES-like_sf"/>
</dbReference>
<dbReference type="NCBIfam" id="NF001527">
    <property type="entry name" value="PRK00364.1-2"/>
    <property type="match status" value="1"/>
</dbReference>
<dbReference type="NCBIfam" id="NF001531">
    <property type="entry name" value="PRK00364.2-2"/>
    <property type="match status" value="1"/>
</dbReference>
<dbReference type="NCBIfam" id="NF001533">
    <property type="entry name" value="PRK00364.2-4"/>
    <property type="match status" value="1"/>
</dbReference>
<dbReference type="PANTHER" id="PTHR10772">
    <property type="entry name" value="10 KDA HEAT SHOCK PROTEIN"/>
    <property type="match status" value="1"/>
</dbReference>
<dbReference type="PANTHER" id="PTHR10772:SF58">
    <property type="entry name" value="CO-CHAPERONIN GROES"/>
    <property type="match status" value="1"/>
</dbReference>
<dbReference type="Pfam" id="PF00166">
    <property type="entry name" value="Cpn10"/>
    <property type="match status" value="1"/>
</dbReference>
<dbReference type="PRINTS" id="PR00297">
    <property type="entry name" value="CHAPERONIN10"/>
</dbReference>
<dbReference type="SMART" id="SM00883">
    <property type="entry name" value="Cpn10"/>
    <property type="match status" value="1"/>
</dbReference>
<dbReference type="SUPFAM" id="SSF50129">
    <property type="entry name" value="GroES-like"/>
    <property type="match status" value="1"/>
</dbReference>
<dbReference type="PROSITE" id="PS00681">
    <property type="entry name" value="CHAPERONINS_CPN10"/>
    <property type="match status" value="1"/>
</dbReference>
<reference key="1">
    <citation type="journal article" date="2009" name="Genome Biol.">
        <title>Genomic and genetic analyses of diversity and plant interactions of Pseudomonas fluorescens.</title>
        <authorList>
            <person name="Silby M.W."/>
            <person name="Cerdeno-Tarraga A.M."/>
            <person name="Vernikos G.S."/>
            <person name="Giddens S.R."/>
            <person name="Jackson R.W."/>
            <person name="Preston G.M."/>
            <person name="Zhang X.-X."/>
            <person name="Moon C.D."/>
            <person name="Gehrig S.M."/>
            <person name="Godfrey S.A.C."/>
            <person name="Knight C.G."/>
            <person name="Malone J.G."/>
            <person name="Robinson Z."/>
            <person name="Spiers A.J."/>
            <person name="Harris S."/>
            <person name="Challis G.L."/>
            <person name="Yaxley A.M."/>
            <person name="Harris D."/>
            <person name="Seeger K."/>
            <person name="Murphy L."/>
            <person name="Rutter S."/>
            <person name="Squares R."/>
            <person name="Quail M.A."/>
            <person name="Saunders E."/>
            <person name="Mavromatis K."/>
            <person name="Brettin T.S."/>
            <person name="Bentley S.D."/>
            <person name="Hothersall J."/>
            <person name="Stephens E."/>
            <person name="Thomas C.M."/>
            <person name="Parkhill J."/>
            <person name="Levy S.B."/>
            <person name="Rainey P.B."/>
            <person name="Thomson N.R."/>
        </authorList>
    </citation>
    <scope>NUCLEOTIDE SEQUENCE [LARGE SCALE GENOMIC DNA]</scope>
    <source>
        <strain>Pf0-1</strain>
    </source>
</reference>
<comment type="function">
    <text evidence="1">Together with the chaperonin GroEL, plays an essential role in assisting protein folding. The GroEL-GroES system forms a nano-cage that allows encapsulation of the non-native substrate proteins and provides a physical environment optimized to promote and accelerate protein folding. GroES binds to the apical surface of the GroEL ring, thereby capping the opening of the GroEL channel.</text>
</comment>
<comment type="subunit">
    <text evidence="1">Heptamer of 7 subunits arranged in a ring. Interacts with the chaperonin GroEL.</text>
</comment>
<comment type="subcellular location">
    <subcellularLocation>
        <location evidence="1">Cytoplasm</location>
    </subcellularLocation>
</comment>
<comment type="similarity">
    <text evidence="1">Belongs to the GroES chaperonin family.</text>
</comment>
<keyword id="KW-0143">Chaperone</keyword>
<keyword id="KW-0963">Cytoplasm</keyword>
<organism>
    <name type="scientific">Pseudomonas fluorescens (strain Pf0-1)</name>
    <dbReference type="NCBI Taxonomy" id="205922"/>
    <lineage>
        <taxon>Bacteria</taxon>
        <taxon>Pseudomonadati</taxon>
        <taxon>Pseudomonadota</taxon>
        <taxon>Gammaproteobacteria</taxon>
        <taxon>Pseudomonadales</taxon>
        <taxon>Pseudomonadaceae</taxon>
        <taxon>Pseudomonas</taxon>
    </lineage>
</organism>
<protein>
    <recommendedName>
        <fullName evidence="1">Co-chaperonin GroES</fullName>
    </recommendedName>
    <alternativeName>
        <fullName evidence="1">10 kDa chaperonin</fullName>
    </alternativeName>
    <alternativeName>
        <fullName evidence="1">Chaperonin-10</fullName>
        <shortName evidence="1">Cpn10</shortName>
    </alternativeName>
</protein>
<name>CH10_PSEPF</name>
<evidence type="ECO:0000255" key="1">
    <source>
        <dbReference type="HAMAP-Rule" id="MF_00580"/>
    </source>
</evidence>
<proteinExistence type="inferred from homology"/>
<feature type="chain" id="PRO_1000025339" description="Co-chaperonin GroES">
    <location>
        <begin position="1"/>
        <end position="97"/>
    </location>
</feature>
<sequence>MKLRPLHDRVVIRRSEEEKKTAGGIVLPGSAAEKANHGEILAVGPGKALESGEVRALSVKVGDKVVFGPYSGSNTVKVDGEDLLVMSENEILAVIEG</sequence>